<proteinExistence type="inferred from homology"/>
<protein>
    <recommendedName>
        <fullName evidence="1">Small ribosomal subunit protein uS11</fullName>
    </recommendedName>
    <alternativeName>
        <fullName evidence="2">30S ribosomal protein S11</fullName>
    </alternativeName>
</protein>
<name>RS11_GEOKA</name>
<organism>
    <name type="scientific">Geobacillus kaustophilus (strain HTA426)</name>
    <dbReference type="NCBI Taxonomy" id="235909"/>
    <lineage>
        <taxon>Bacteria</taxon>
        <taxon>Bacillati</taxon>
        <taxon>Bacillota</taxon>
        <taxon>Bacilli</taxon>
        <taxon>Bacillales</taxon>
        <taxon>Anoxybacillaceae</taxon>
        <taxon>Geobacillus</taxon>
        <taxon>Geobacillus thermoleovorans group</taxon>
    </lineage>
</organism>
<keyword id="KW-1185">Reference proteome</keyword>
<keyword id="KW-0687">Ribonucleoprotein</keyword>
<keyword id="KW-0689">Ribosomal protein</keyword>
<keyword id="KW-0694">RNA-binding</keyword>
<keyword id="KW-0699">rRNA-binding</keyword>
<reference key="1">
    <citation type="journal article" date="2004" name="Nucleic Acids Res.">
        <title>Thermoadaptation trait revealed by the genome sequence of thermophilic Geobacillus kaustophilus.</title>
        <authorList>
            <person name="Takami H."/>
            <person name="Takaki Y."/>
            <person name="Chee G.-J."/>
            <person name="Nishi S."/>
            <person name="Shimamura S."/>
            <person name="Suzuki H."/>
            <person name="Matsui S."/>
            <person name="Uchiyama I."/>
        </authorList>
    </citation>
    <scope>NUCLEOTIDE SEQUENCE [LARGE SCALE GENOMIC DNA]</scope>
    <source>
        <strain>HTA426</strain>
    </source>
</reference>
<gene>
    <name evidence="1" type="primary">rpsK</name>
    <name type="ordered locus">GK0132</name>
</gene>
<accession>Q5L3R3</accession>
<dbReference type="EMBL" id="BA000043">
    <property type="protein sequence ID" value="BAD74417.1"/>
    <property type="molecule type" value="Genomic_DNA"/>
</dbReference>
<dbReference type="RefSeq" id="WP_011229644.1">
    <property type="nucleotide sequence ID" value="NC_006510.1"/>
</dbReference>
<dbReference type="SMR" id="Q5L3R3"/>
<dbReference type="STRING" id="235909.GK0132"/>
<dbReference type="GeneID" id="89612874"/>
<dbReference type="KEGG" id="gka:GK0132"/>
<dbReference type="eggNOG" id="COG0100">
    <property type="taxonomic scope" value="Bacteria"/>
</dbReference>
<dbReference type="HOGENOM" id="CLU_072439_5_0_9"/>
<dbReference type="Proteomes" id="UP000001172">
    <property type="component" value="Chromosome"/>
</dbReference>
<dbReference type="GO" id="GO:1990904">
    <property type="term" value="C:ribonucleoprotein complex"/>
    <property type="evidence" value="ECO:0007669"/>
    <property type="project" value="UniProtKB-KW"/>
</dbReference>
<dbReference type="GO" id="GO:0005840">
    <property type="term" value="C:ribosome"/>
    <property type="evidence" value="ECO:0007669"/>
    <property type="project" value="UniProtKB-KW"/>
</dbReference>
<dbReference type="GO" id="GO:0019843">
    <property type="term" value="F:rRNA binding"/>
    <property type="evidence" value="ECO:0007669"/>
    <property type="project" value="UniProtKB-UniRule"/>
</dbReference>
<dbReference type="GO" id="GO:0003735">
    <property type="term" value="F:structural constituent of ribosome"/>
    <property type="evidence" value="ECO:0007669"/>
    <property type="project" value="InterPro"/>
</dbReference>
<dbReference type="GO" id="GO:0006412">
    <property type="term" value="P:translation"/>
    <property type="evidence" value="ECO:0007669"/>
    <property type="project" value="UniProtKB-UniRule"/>
</dbReference>
<dbReference type="FunFam" id="3.30.420.80:FF:000001">
    <property type="entry name" value="30S ribosomal protein S11"/>
    <property type="match status" value="1"/>
</dbReference>
<dbReference type="Gene3D" id="3.30.420.80">
    <property type="entry name" value="Ribosomal protein S11"/>
    <property type="match status" value="1"/>
</dbReference>
<dbReference type="HAMAP" id="MF_01310">
    <property type="entry name" value="Ribosomal_uS11"/>
    <property type="match status" value="1"/>
</dbReference>
<dbReference type="InterPro" id="IPR001971">
    <property type="entry name" value="Ribosomal_uS11"/>
</dbReference>
<dbReference type="InterPro" id="IPR019981">
    <property type="entry name" value="Ribosomal_uS11_bac-type"/>
</dbReference>
<dbReference type="InterPro" id="IPR018102">
    <property type="entry name" value="Ribosomal_uS11_CS"/>
</dbReference>
<dbReference type="InterPro" id="IPR036967">
    <property type="entry name" value="Ribosomal_uS11_sf"/>
</dbReference>
<dbReference type="NCBIfam" id="NF003698">
    <property type="entry name" value="PRK05309.1"/>
    <property type="match status" value="1"/>
</dbReference>
<dbReference type="NCBIfam" id="TIGR03632">
    <property type="entry name" value="uS11_bact"/>
    <property type="match status" value="1"/>
</dbReference>
<dbReference type="PANTHER" id="PTHR11759">
    <property type="entry name" value="40S RIBOSOMAL PROTEIN S14/30S RIBOSOMAL PROTEIN S11"/>
    <property type="match status" value="1"/>
</dbReference>
<dbReference type="Pfam" id="PF00411">
    <property type="entry name" value="Ribosomal_S11"/>
    <property type="match status" value="1"/>
</dbReference>
<dbReference type="PIRSF" id="PIRSF002131">
    <property type="entry name" value="Ribosomal_S11"/>
    <property type="match status" value="1"/>
</dbReference>
<dbReference type="SUPFAM" id="SSF53137">
    <property type="entry name" value="Translational machinery components"/>
    <property type="match status" value="1"/>
</dbReference>
<dbReference type="PROSITE" id="PS00054">
    <property type="entry name" value="RIBOSOMAL_S11"/>
    <property type="match status" value="1"/>
</dbReference>
<evidence type="ECO:0000255" key="1">
    <source>
        <dbReference type="HAMAP-Rule" id="MF_01310"/>
    </source>
</evidence>
<evidence type="ECO:0000305" key="2"/>
<feature type="chain" id="PRO_0000123151" description="Small ribosomal subunit protein uS11">
    <location>
        <begin position="1"/>
        <end position="129"/>
    </location>
</feature>
<comment type="function">
    <text evidence="1">Located on the platform of the 30S subunit, it bridges several disparate RNA helices of the 16S rRNA. Forms part of the Shine-Dalgarno cleft in the 70S ribosome.</text>
</comment>
<comment type="subunit">
    <text evidence="1">Part of the 30S ribosomal subunit. Interacts with proteins S7 and S18. Binds to IF-3.</text>
</comment>
<comment type="similarity">
    <text evidence="1">Belongs to the universal ribosomal protein uS11 family.</text>
</comment>
<sequence length="129" mass="13810">MARRTNTRKRRVRKNIDTGIAHIRSTFNNTIVTITDVHGNAIAWASAGSLGFKGSRKSTPFAAQMAAEAAAKASMEHGMKTVEVNVKGPGAGREAAIRALQAAGLEITAIKDVTPIPHNGCRPPKRRRV</sequence>